<proteinExistence type="inferred from homology"/>
<feature type="chain" id="PRO_0000363806" description="Eukaryotic translation initiation factor 3 subunit B">
    <location>
        <begin position="1"/>
        <end position="736"/>
    </location>
</feature>
<feature type="domain" description="RRM" evidence="1">
    <location>
        <begin position="37"/>
        <end position="120"/>
    </location>
</feature>
<feature type="repeat" description="WD 1">
    <location>
        <begin position="140"/>
        <end position="182"/>
    </location>
</feature>
<feature type="repeat" description="WD 2">
    <location>
        <begin position="186"/>
        <end position="224"/>
    </location>
</feature>
<feature type="repeat" description="WD 3">
    <location>
        <begin position="226"/>
        <end position="244"/>
    </location>
</feature>
<feature type="repeat" description="WD 4">
    <location>
        <begin position="245"/>
        <end position="284"/>
    </location>
</feature>
<feature type="repeat" description="WD 5">
    <location>
        <begin position="288"/>
        <end position="328"/>
    </location>
</feature>
<feature type="repeat" description="WD 6">
    <location>
        <begin position="332"/>
        <end position="375"/>
    </location>
</feature>
<feature type="repeat" description="WD 7">
    <location>
        <begin position="443"/>
        <end position="483"/>
    </location>
</feature>
<feature type="repeat" description="WD 8">
    <location>
        <begin position="511"/>
        <end position="557"/>
    </location>
</feature>
<feature type="repeat" description="WD 9">
    <location>
        <begin position="566"/>
        <end position="604"/>
    </location>
</feature>
<feature type="repeat" description="WD 10">
    <location>
        <begin position="616"/>
        <end position="662"/>
    </location>
</feature>
<feature type="region of interest" description="Sufficient for interaction with PIC8" evidence="1">
    <location>
        <begin position="1"/>
        <end position="219"/>
    </location>
</feature>
<feature type="region of interest" description="Sufficient for interaction with HCR1 and TIF32" evidence="1">
    <location>
        <begin position="1"/>
        <end position="94"/>
    </location>
</feature>
<gene>
    <name evidence="1" type="primary">PRT1</name>
    <name type="ordered locus">ADR399C</name>
</gene>
<sequence length="736" mass="84631">MAAVFDDIRLEDIPVDDVDMQDLEETYAVERSIEFDRYVVVDGAPVAPEAKVGALQKVLTKLFSQAGSVVDMDVPVEEGRTKGHLFIEFEDAGAARRAIKMFNGKKLDVKHRLWVNGLDDMERYGRPDFSTEYREPVVPEFEATEYPRSWLQDETGRDQFVLQKGEMTAVFWNRNNLQPENVVEPRRNWSNSILNFSPHGTYLFSFHDQGIASWGGPQFKRLRRFAHPDVKAISMSSTEKYLVTFSSEPLEVSDEPNEACPFGPESRGHQLCIWDVATGVCVKTFALPPQQQLQWPMVKWSFDDKFCARLGPGAIAVYETEKNFQLLGGKVMKIEDVQDFSFAPKGIKLASNRPNDPPSTVMVYWTPESNNQSCKAVLIELPNRRVLRTINLVQVTDVSFHWQNQAEFLCVQVDRHTKSRKTIFTNMEICSLTAREFPFEKVEIKDRCMRFAWEPNSDRFVIISRSENVNDNPAIAKNVVSFYAPEKKVDKKGVIIDKELSIFKKWKLVRAIDGKFSNEITWSPAGRFVCVAAIGKIGSRNENIDFYDMDYPNTEKIINTATDVNATLRDVAHINYASATDYEWDPSGRYLAFWSSAWKHKAENGYKVFNLAGAIVREELITDFNNFFWRPRPDSLLSNSEKKKVRKNLKEWSAHFEEQDAMEADSATRELILKRRNWLDEWSKYREACKQTLSESGLSICDCVELSTKDEDCELVEEIRETVVEESTEEVPFFEE</sequence>
<name>EIF3B_EREGS</name>
<protein>
    <recommendedName>
        <fullName evidence="1">Eukaryotic translation initiation factor 3 subunit B</fullName>
        <shortName evidence="1">eIF3b</shortName>
    </recommendedName>
    <alternativeName>
        <fullName evidence="1">Eukaryotic translation initiation factor 3 90 kDa subunit homolog</fullName>
        <shortName evidence="1">eIF3 p90</shortName>
    </alternativeName>
    <alternativeName>
        <fullName>Translation initiation factor eIF3 p90 subunit homolog</fullName>
    </alternativeName>
</protein>
<keyword id="KW-0963">Cytoplasm</keyword>
<keyword id="KW-0396">Initiation factor</keyword>
<keyword id="KW-0648">Protein biosynthesis</keyword>
<keyword id="KW-1185">Reference proteome</keyword>
<keyword id="KW-0677">Repeat</keyword>
<keyword id="KW-0694">RNA-binding</keyword>
<keyword id="KW-0853">WD repeat</keyword>
<dbReference type="EMBL" id="AE016817">
    <property type="protein sequence ID" value="AAS52318.1"/>
    <property type="molecule type" value="Genomic_DNA"/>
</dbReference>
<dbReference type="RefSeq" id="NP_984494.1">
    <property type="nucleotide sequence ID" value="NM_209847.1"/>
</dbReference>
<dbReference type="SMR" id="Q758X9"/>
<dbReference type="FunCoup" id="Q758X9">
    <property type="interactions" value="1435"/>
</dbReference>
<dbReference type="STRING" id="284811.Q758X9"/>
<dbReference type="EnsemblFungi" id="AAS52318">
    <property type="protein sequence ID" value="AAS52318"/>
    <property type="gene ID" value="AGOS_ADR399C"/>
</dbReference>
<dbReference type="GeneID" id="4620659"/>
<dbReference type="KEGG" id="ago:AGOS_ADR399C"/>
<dbReference type="eggNOG" id="KOG2314">
    <property type="taxonomic scope" value="Eukaryota"/>
</dbReference>
<dbReference type="HOGENOM" id="CLU_011152_4_0_1"/>
<dbReference type="InParanoid" id="Q758X9"/>
<dbReference type="OMA" id="LWGGPQF"/>
<dbReference type="OrthoDB" id="10250414at2759"/>
<dbReference type="Proteomes" id="UP000000591">
    <property type="component" value="Chromosome IV"/>
</dbReference>
<dbReference type="GO" id="GO:0010494">
    <property type="term" value="C:cytoplasmic stress granule"/>
    <property type="evidence" value="ECO:0007669"/>
    <property type="project" value="EnsemblFungi"/>
</dbReference>
<dbReference type="GO" id="GO:0016282">
    <property type="term" value="C:eukaryotic 43S preinitiation complex"/>
    <property type="evidence" value="ECO:0007669"/>
    <property type="project" value="UniProtKB-UniRule"/>
</dbReference>
<dbReference type="GO" id="GO:0033290">
    <property type="term" value="C:eukaryotic 48S preinitiation complex"/>
    <property type="evidence" value="ECO:0007669"/>
    <property type="project" value="UniProtKB-UniRule"/>
</dbReference>
<dbReference type="GO" id="GO:0005852">
    <property type="term" value="C:eukaryotic translation initiation factor 3 complex"/>
    <property type="evidence" value="ECO:0000318"/>
    <property type="project" value="GO_Central"/>
</dbReference>
<dbReference type="GO" id="GO:0071540">
    <property type="term" value="C:eukaryotic translation initiation factor 3 complex, eIF3e"/>
    <property type="evidence" value="ECO:0007669"/>
    <property type="project" value="EnsemblFungi"/>
</dbReference>
<dbReference type="GO" id="GO:0071541">
    <property type="term" value="C:eukaryotic translation initiation factor 3 complex, eIF3m"/>
    <property type="evidence" value="ECO:0007669"/>
    <property type="project" value="EnsemblFungi"/>
</dbReference>
<dbReference type="GO" id="GO:0043614">
    <property type="term" value="C:multi-eIF complex"/>
    <property type="evidence" value="ECO:0007669"/>
    <property type="project" value="EnsemblFungi"/>
</dbReference>
<dbReference type="GO" id="GO:0042802">
    <property type="term" value="F:identical protein binding"/>
    <property type="evidence" value="ECO:0007669"/>
    <property type="project" value="EnsemblFungi"/>
</dbReference>
<dbReference type="GO" id="GO:0003723">
    <property type="term" value="F:RNA binding"/>
    <property type="evidence" value="ECO:0007669"/>
    <property type="project" value="UniProtKB-UniRule"/>
</dbReference>
<dbReference type="GO" id="GO:0003743">
    <property type="term" value="F:translation initiation factor activity"/>
    <property type="evidence" value="ECO:0007669"/>
    <property type="project" value="UniProtKB-UniRule"/>
</dbReference>
<dbReference type="GO" id="GO:0031369">
    <property type="term" value="F:translation initiation factor binding"/>
    <property type="evidence" value="ECO:0007669"/>
    <property type="project" value="InterPro"/>
</dbReference>
<dbReference type="GO" id="GO:0001732">
    <property type="term" value="P:formation of cytoplasmic translation initiation complex"/>
    <property type="evidence" value="ECO:0007669"/>
    <property type="project" value="UniProtKB-UniRule"/>
</dbReference>
<dbReference type="GO" id="GO:0006413">
    <property type="term" value="P:translational initiation"/>
    <property type="evidence" value="ECO:0000318"/>
    <property type="project" value="GO_Central"/>
</dbReference>
<dbReference type="CDD" id="cd12278">
    <property type="entry name" value="RRM_eIF3B"/>
    <property type="match status" value="1"/>
</dbReference>
<dbReference type="Gene3D" id="3.30.70.330">
    <property type="match status" value="1"/>
</dbReference>
<dbReference type="Gene3D" id="2.130.10.10">
    <property type="entry name" value="YVTN repeat-like/Quinoprotein amine dehydrogenase"/>
    <property type="match status" value="1"/>
</dbReference>
<dbReference type="HAMAP" id="MF_03001">
    <property type="entry name" value="eIF3b"/>
    <property type="match status" value="1"/>
</dbReference>
<dbReference type="InterPro" id="IPR011400">
    <property type="entry name" value="EIF3B"/>
</dbReference>
<dbReference type="InterPro" id="IPR034363">
    <property type="entry name" value="eIF3B_RRM"/>
</dbReference>
<dbReference type="InterPro" id="IPR012677">
    <property type="entry name" value="Nucleotide-bd_a/b_plait_sf"/>
</dbReference>
<dbReference type="InterPro" id="IPR035979">
    <property type="entry name" value="RBD_domain_sf"/>
</dbReference>
<dbReference type="InterPro" id="IPR000504">
    <property type="entry name" value="RRM_dom"/>
</dbReference>
<dbReference type="InterPro" id="IPR013979">
    <property type="entry name" value="TIF_beta_prop-like"/>
</dbReference>
<dbReference type="InterPro" id="IPR015943">
    <property type="entry name" value="WD40/YVTN_repeat-like_dom_sf"/>
</dbReference>
<dbReference type="PANTHER" id="PTHR14068">
    <property type="entry name" value="EUKARYOTIC TRANSLATION INITIATION FACTOR 3 EIF3 -RELATED"/>
    <property type="match status" value="1"/>
</dbReference>
<dbReference type="PANTHER" id="PTHR14068:SF0">
    <property type="entry name" value="EUKARYOTIC TRANSLATION INITIATION FACTOR 3 SUBUNIT B"/>
    <property type="match status" value="1"/>
</dbReference>
<dbReference type="Pfam" id="PF08662">
    <property type="entry name" value="eIF2A"/>
    <property type="match status" value="1"/>
</dbReference>
<dbReference type="Pfam" id="PF00076">
    <property type="entry name" value="RRM_1"/>
    <property type="match status" value="1"/>
</dbReference>
<dbReference type="PIRSF" id="PIRSF036424">
    <property type="entry name" value="eIF3b"/>
    <property type="match status" value="1"/>
</dbReference>
<dbReference type="SMART" id="SM00360">
    <property type="entry name" value="RRM"/>
    <property type="match status" value="1"/>
</dbReference>
<dbReference type="SUPFAM" id="SSF82171">
    <property type="entry name" value="DPP6 N-terminal domain-like"/>
    <property type="match status" value="1"/>
</dbReference>
<dbReference type="SUPFAM" id="SSF54928">
    <property type="entry name" value="RNA-binding domain, RBD"/>
    <property type="match status" value="1"/>
</dbReference>
<dbReference type="PROSITE" id="PS50102">
    <property type="entry name" value="RRM"/>
    <property type="match status" value="1"/>
</dbReference>
<organism>
    <name type="scientific">Eremothecium gossypii (strain ATCC 10895 / CBS 109.51 / FGSC 9923 / NRRL Y-1056)</name>
    <name type="common">Yeast</name>
    <name type="synonym">Ashbya gossypii</name>
    <dbReference type="NCBI Taxonomy" id="284811"/>
    <lineage>
        <taxon>Eukaryota</taxon>
        <taxon>Fungi</taxon>
        <taxon>Dikarya</taxon>
        <taxon>Ascomycota</taxon>
        <taxon>Saccharomycotina</taxon>
        <taxon>Saccharomycetes</taxon>
        <taxon>Saccharomycetales</taxon>
        <taxon>Saccharomycetaceae</taxon>
        <taxon>Eremothecium</taxon>
    </lineage>
</organism>
<comment type="function">
    <text evidence="1">RNA-binding component of the eukaryotic translation initiation factor 3 (eIF-3) complex, which is involved in protein synthesis of a specialized repertoire of mRNAs and, together with other initiation factors, stimulates binding of mRNA and methionyl-tRNAi to the 40S ribosome. The eIF-3 complex specifically targets and initiates translation of a subset of mRNAs involved in cell proliferation.</text>
</comment>
<comment type="subunit">
    <text evidence="1">Component of the eukaryotic translation initiation factor 3 (eIF-3) complex.</text>
</comment>
<comment type="subcellular location">
    <subcellularLocation>
        <location evidence="1">Cytoplasm</location>
    </subcellularLocation>
</comment>
<comment type="similarity">
    <text evidence="1">Belongs to the eIF-3 subunit B family.</text>
</comment>
<accession>Q758X9</accession>
<evidence type="ECO:0000255" key="1">
    <source>
        <dbReference type="HAMAP-Rule" id="MF_03001"/>
    </source>
</evidence>
<reference key="1">
    <citation type="journal article" date="2004" name="Science">
        <title>The Ashbya gossypii genome as a tool for mapping the ancient Saccharomyces cerevisiae genome.</title>
        <authorList>
            <person name="Dietrich F.S."/>
            <person name="Voegeli S."/>
            <person name="Brachat S."/>
            <person name="Lerch A."/>
            <person name="Gates K."/>
            <person name="Steiner S."/>
            <person name="Mohr C."/>
            <person name="Poehlmann R."/>
            <person name="Luedi P."/>
            <person name="Choi S."/>
            <person name="Wing R.A."/>
            <person name="Flavier A."/>
            <person name="Gaffney T.D."/>
            <person name="Philippsen P."/>
        </authorList>
    </citation>
    <scope>NUCLEOTIDE SEQUENCE [LARGE SCALE GENOMIC DNA]</scope>
    <source>
        <strain>ATCC 10895 / CBS 109.51 / FGSC 9923 / NRRL Y-1056</strain>
    </source>
</reference>
<reference key="2">
    <citation type="journal article" date="2013" name="G3 (Bethesda)">
        <title>Genomes of Ashbya fungi isolated from insects reveal four mating-type loci, numerous translocations, lack of transposons, and distinct gene duplications.</title>
        <authorList>
            <person name="Dietrich F.S."/>
            <person name="Voegeli S."/>
            <person name="Kuo S."/>
            <person name="Philippsen P."/>
        </authorList>
    </citation>
    <scope>GENOME REANNOTATION</scope>
    <source>
        <strain>ATCC 10895 / CBS 109.51 / FGSC 9923 / NRRL Y-1056</strain>
    </source>
</reference>